<sequence>MKHTNSKQKLKDIINFCQAIFTLCIICLYQANISNSYPIYAQQTYENPRESTGRIVCANCHLAQKNIYIEAPKEVLPNTVFETVVKIPYEFNKKQILGNGSKGDLNVGAVVILPEGFKLAPKDRMDEKLLKKTKNLYFNNYSQKLDNIIVIGPITGKDNQEITFPILAPDPQINKNTHFLKYSIYVGANKGRGQLYPSGEKSNNNPIPSNAEGRIEKIKPNEDGGYEVIIKTKDDETISQYVPIGLNLTIKEGQRIKAGEYITTDPNVGGFGQSEIEIVLQNPTRLISFIFFSISVLISQLFFVLKKKQFEKVQSLNQNF</sequence>
<keyword id="KW-0150">Chloroplast</keyword>
<keyword id="KW-0249">Electron transport</keyword>
<keyword id="KW-0349">Heme</keyword>
<keyword id="KW-0408">Iron</keyword>
<keyword id="KW-0472">Membrane</keyword>
<keyword id="KW-0479">Metal-binding</keyword>
<keyword id="KW-0602">Photosynthesis</keyword>
<keyword id="KW-0934">Plastid</keyword>
<keyword id="KW-0732">Signal</keyword>
<keyword id="KW-0793">Thylakoid</keyword>
<keyword id="KW-0812">Transmembrane</keyword>
<keyword id="KW-1133">Transmembrane helix</keyword>
<keyword id="KW-0813">Transport</keyword>
<protein>
    <recommendedName>
        <fullName>Cytochrome f</fullName>
    </recommendedName>
</protein>
<feature type="signal peptide" evidence="1">
    <location>
        <begin position="1"/>
        <end position="36"/>
    </location>
</feature>
<feature type="chain" id="PRO_0000023813" description="Cytochrome f">
    <location>
        <begin position="37"/>
        <end position="320"/>
    </location>
</feature>
<feature type="transmembrane region" description="Helical" evidence="2">
    <location>
        <begin position="286"/>
        <end position="305"/>
    </location>
</feature>
<feature type="binding site" description="axial binding residue" evidence="1">
    <location>
        <position position="37"/>
    </location>
    <ligand>
        <name>heme</name>
        <dbReference type="ChEBI" id="CHEBI:30413"/>
    </ligand>
    <ligandPart>
        <name>Fe</name>
        <dbReference type="ChEBI" id="CHEBI:18248"/>
    </ligandPart>
</feature>
<feature type="binding site" description="covalent" evidence="1">
    <location>
        <position position="57"/>
    </location>
    <ligand>
        <name>heme</name>
        <dbReference type="ChEBI" id="CHEBI:30413"/>
    </ligand>
</feature>
<feature type="binding site" description="covalent" evidence="1">
    <location>
        <position position="60"/>
    </location>
    <ligand>
        <name>heme</name>
        <dbReference type="ChEBI" id="CHEBI:30413"/>
    </ligand>
</feature>
<feature type="binding site" description="axial binding residue" evidence="1">
    <location>
        <position position="61"/>
    </location>
    <ligand>
        <name>heme</name>
        <dbReference type="ChEBI" id="CHEBI:30413"/>
    </ligand>
    <ligandPart>
        <name>Fe</name>
        <dbReference type="ChEBI" id="CHEBI:18248"/>
    </ligandPart>
</feature>
<comment type="function">
    <text evidence="1">Component of the cytochrome b6-f complex, which mediates electron transfer between photosystem II (PSII) and photosystem I (PSI), cyclic electron flow around PSI, and state transitions.</text>
</comment>
<comment type="cofactor">
    <cofactor evidence="1">
        <name>heme</name>
        <dbReference type="ChEBI" id="CHEBI:30413"/>
    </cofactor>
    <text evidence="1">Binds 1 heme group covalently.</text>
</comment>
<comment type="subunit">
    <text evidence="1">The 4 large subunits of the cytochrome b6-f complex are cytochrome b6, subunit IV (17 kDa polypeptide, petD), cytochrome f and the Rieske protein, while the 4 small subunits are PetG, PetL, PetM and PetN. The complex functions as a dimer (By similarity).</text>
</comment>
<comment type="subcellular location">
    <subcellularLocation>
        <location evidence="1">Plastid</location>
        <location evidence="1">Chloroplast thylakoid membrane</location>
        <topology evidence="1">Single-pass membrane protein</topology>
    </subcellularLocation>
</comment>
<comment type="similarity">
    <text evidence="3">Belongs to the cytochrome f family.</text>
</comment>
<gene>
    <name type="primary">petA</name>
</gene>
<geneLocation type="chloroplast"/>
<dbReference type="EMBL" id="AF022186">
    <property type="protein sequence ID" value="AAF12899.1"/>
    <property type="molecule type" value="Genomic_DNA"/>
</dbReference>
<dbReference type="RefSeq" id="NP_045195.1">
    <property type="nucleotide sequence ID" value="NC_001840.1"/>
</dbReference>
<dbReference type="SMR" id="Q9TLS4"/>
<dbReference type="GeneID" id="800189"/>
<dbReference type="GO" id="GO:0009535">
    <property type="term" value="C:chloroplast thylakoid membrane"/>
    <property type="evidence" value="ECO:0007669"/>
    <property type="project" value="UniProtKB-SubCell"/>
</dbReference>
<dbReference type="GO" id="GO:0009055">
    <property type="term" value="F:electron transfer activity"/>
    <property type="evidence" value="ECO:0007669"/>
    <property type="project" value="UniProtKB-UniRule"/>
</dbReference>
<dbReference type="GO" id="GO:0020037">
    <property type="term" value="F:heme binding"/>
    <property type="evidence" value="ECO:0007669"/>
    <property type="project" value="InterPro"/>
</dbReference>
<dbReference type="GO" id="GO:0005506">
    <property type="term" value="F:iron ion binding"/>
    <property type="evidence" value="ECO:0007669"/>
    <property type="project" value="InterPro"/>
</dbReference>
<dbReference type="GO" id="GO:0015979">
    <property type="term" value="P:photosynthesis"/>
    <property type="evidence" value="ECO:0007669"/>
    <property type="project" value="UniProtKB-UniRule"/>
</dbReference>
<dbReference type="FunFam" id="2.60.40.830:FF:000001">
    <property type="entry name" value="Cytochrome f"/>
    <property type="match status" value="1"/>
</dbReference>
<dbReference type="Gene3D" id="2.40.50.100">
    <property type="match status" value="1"/>
</dbReference>
<dbReference type="Gene3D" id="2.60.40.830">
    <property type="entry name" value="Cytochrome f large domain"/>
    <property type="match status" value="1"/>
</dbReference>
<dbReference type="Gene3D" id="1.20.5.700">
    <property type="entry name" value="Single helix bin"/>
    <property type="match status" value="1"/>
</dbReference>
<dbReference type="HAMAP" id="MF_00610">
    <property type="entry name" value="Cytb6_f_cytF"/>
    <property type="match status" value="1"/>
</dbReference>
<dbReference type="InterPro" id="IPR024058">
    <property type="entry name" value="Cyt-f_TM"/>
</dbReference>
<dbReference type="InterPro" id="IPR002325">
    <property type="entry name" value="Cyt_f"/>
</dbReference>
<dbReference type="InterPro" id="IPR024094">
    <property type="entry name" value="Cyt_f_lg_dom"/>
</dbReference>
<dbReference type="InterPro" id="IPR036826">
    <property type="entry name" value="Cyt_f_lg_dom_sf"/>
</dbReference>
<dbReference type="InterPro" id="IPR011054">
    <property type="entry name" value="Rudment_hybrid_motif"/>
</dbReference>
<dbReference type="PANTHER" id="PTHR33288">
    <property type="match status" value="1"/>
</dbReference>
<dbReference type="PANTHER" id="PTHR33288:SF10">
    <property type="entry name" value="CYTOCHROME F"/>
    <property type="match status" value="1"/>
</dbReference>
<dbReference type="Pfam" id="PF01333">
    <property type="entry name" value="Apocytochr_F_C"/>
    <property type="match status" value="1"/>
</dbReference>
<dbReference type="Pfam" id="PF16639">
    <property type="entry name" value="Apocytochr_F_N"/>
    <property type="match status" value="1"/>
</dbReference>
<dbReference type="PRINTS" id="PR00610">
    <property type="entry name" value="CYTOCHROMEF"/>
</dbReference>
<dbReference type="SUPFAM" id="SSF103431">
    <property type="entry name" value="Cytochrome f subunit of the cytochrome b6f complex, transmembrane anchor"/>
    <property type="match status" value="1"/>
</dbReference>
<dbReference type="SUPFAM" id="SSF49441">
    <property type="entry name" value="Cytochrome f, large domain"/>
    <property type="match status" value="1"/>
</dbReference>
<dbReference type="SUPFAM" id="SSF51246">
    <property type="entry name" value="Rudiment single hybrid motif"/>
    <property type="match status" value="1"/>
</dbReference>
<dbReference type="PROSITE" id="PS51010">
    <property type="entry name" value="CYTF"/>
    <property type="match status" value="1"/>
</dbReference>
<name>CYF_CYACA</name>
<evidence type="ECO:0000250" key="1"/>
<evidence type="ECO:0000255" key="2"/>
<evidence type="ECO:0000305" key="3"/>
<proteinExistence type="inferred from homology"/>
<organism>
    <name type="scientific">Cyanidium caldarium</name>
    <name type="common">Red alga</name>
    <dbReference type="NCBI Taxonomy" id="2771"/>
    <lineage>
        <taxon>Eukaryota</taxon>
        <taxon>Rhodophyta</taxon>
        <taxon>Bangiophyceae</taxon>
        <taxon>Cyanidiales</taxon>
        <taxon>Cyanidiaceae</taxon>
        <taxon>Cyanidium</taxon>
    </lineage>
</organism>
<reference key="1">
    <citation type="journal article" date="2000" name="J. Mol. Evol.">
        <title>The structure and gene repertoire of an ancient red algal plastid genome.</title>
        <authorList>
            <person name="Gloeckner G."/>
            <person name="Rosenthal A."/>
            <person name="Valentin K.-U."/>
        </authorList>
    </citation>
    <scope>NUCLEOTIDE SEQUENCE [LARGE SCALE GENOMIC DNA]</scope>
    <source>
        <strain>RK-1</strain>
    </source>
</reference>
<accession>Q9TLS4</accession>